<protein>
    <recommendedName>
        <fullName>Serine/threonine-protein kinase 4</fullName>
        <ecNumber>2.7.11.1</ecNumber>
    </recommendedName>
    <component>
        <recommendedName>
            <fullName>Serine/threonine-protein kinase 4 37kDa subunit</fullName>
            <shortName>MST1/N</shortName>
        </recommendedName>
    </component>
    <component>
        <recommendedName>
            <fullName>Serine/threonine-protein kinase 4 18kDa subunit</fullName>
            <shortName>MST1/C</shortName>
        </recommendedName>
    </component>
</protein>
<keyword id="KW-0007">Acetylation</keyword>
<keyword id="KW-0053">Apoptosis</keyword>
<keyword id="KW-0067">ATP-binding</keyword>
<keyword id="KW-0175">Coiled coil</keyword>
<keyword id="KW-0963">Cytoplasm</keyword>
<keyword id="KW-0418">Kinase</keyword>
<keyword id="KW-0460">Magnesium</keyword>
<keyword id="KW-0479">Metal-binding</keyword>
<keyword id="KW-0547">Nucleotide-binding</keyword>
<keyword id="KW-0539">Nucleus</keyword>
<keyword id="KW-0597">Phosphoprotein</keyword>
<keyword id="KW-1185">Reference proteome</keyword>
<keyword id="KW-0723">Serine/threonine-protein kinase</keyword>
<keyword id="KW-0808">Transferase</keyword>
<evidence type="ECO:0000250" key="1"/>
<evidence type="ECO:0000250" key="2">
    <source>
        <dbReference type="UniProtKB" id="Q13043"/>
    </source>
</evidence>
<evidence type="ECO:0000250" key="3">
    <source>
        <dbReference type="UniProtKB" id="Q9JI11"/>
    </source>
</evidence>
<evidence type="ECO:0000255" key="4"/>
<evidence type="ECO:0000255" key="5">
    <source>
        <dbReference type="PROSITE-ProRule" id="PRU00159"/>
    </source>
</evidence>
<evidence type="ECO:0000255" key="6">
    <source>
        <dbReference type="PROSITE-ProRule" id="PRU00310"/>
    </source>
</evidence>
<evidence type="ECO:0000256" key="7">
    <source>
        <dbReference type="SAM" id="MobiDB-lite"/>
    </source>
</evidence>
<evidence type="ECO:0000305" key="8"/>
<name>STK4_PAPAN</name>
<dbReference type="EC" id="2.7.11.1"/>
<dbReference type="EMBL" id="DP000036">
    <property type="protein sequence ID" value="ABO52906.1"/>
    <property type="molecule type" value="Genomic_DNA"/>
</dbReference>
<dbReference type="RefSeq" id="NP_001162203.1">
    <property type="nucleotide sequence ID" value="NM_001168732.1"/>
</dbReference>
<dbReference type="SMR" id="A4K2M3"/>
<dbReference type="STRING" id="9555.ENSPANP00000017674"/>
<dbReference type="GeneID" id="100137163"/>
<dbReference type="KEGG" id="panu:100137163"/>
<dbReference type="CTD" id="6789"/>
<dbReference type="eggNOG" id="KOG0574">
    <property type="taxonomic scope" value="Eukaryota"/>
</dbReference>
<dbReference type="Proteomes" id="UP000028761">
    <property type="component" value="Unplaced"/>
</dbReference>
<dbReference type="GO" id="GO:0005737">
    <property type="term" value="C:cytoplasm"/>
    <property type="evidence" value="ECO:0000250"/>
    <property type="project" value="UniProtKB"/>
</dbReference>
<dbReference type="GO" id="GO:0005634">
    <property type="term" value="C:nucleus"/>
    <property type="evidence" value="ECO:0000250"/>
    <property type="project" value="UniProtKB"/>
</dbReference>
<dbReference type="GO" id="GO:0005524">
    <property type="term" value="F:ATP binding"/>
    <property type="evidence" value="ECO:0007669"/>
    <property type="project" value="UniProtKB-KW"/>
</dbReference>
<dbReference type="GO" id="GO:0046872">
    <property type="term" value="F:metal ion binding"/>
    <property type="evidence" value="ECO:0007669"/>
    <property type="project" value="UniProtKB-KW"/>
</dbReference>
<dbReference type="GO" id="GO:0106310">
    <property type="term" value="F:protein serine kinase activity"/>
    <property type="evidence" value="ECO:0007669"/>
    <property type="project" value="RHEA"/>
</dbReference>
<dbReference type="GO" id="GO:0004674">
    <property type="term" value="F:protein serine/threonine kinase activity"/>
    <property type="evidence" value="ECO:0000250"/>
    <property type="project" value="UniProtKB"/>
</dbReference>
<dbReference type="GO" id="GO:0006915">
    <property type="term" value="P:apoptotic process"/>
    <property type="evidence" value="ECO:0000250"/>
    <property type="project" value="UniProtKB"/>
</dbReference>
<dbReference type="GO" id="GO:0035329">
    <property type="term" value="P:hippo signaling"/>
    <property type="evidence" value="ECO:0000250"/>
    <property type="project" value="UniProtKB"/>
</dbReference>
<dbReference type="GO" id="GO:0051262">
    <property type="term" value="P:protein tetramerization"/>
    <property type="evidence" value="ECO:0007669"/>
    <property type="project" value="InterPro"/>
</dbReference>
<dbReference type="CDD" id="cd21887">
    <property type="entry name" value="SARAH_MST1"/>
    <property type="match status" value="1"/>
</dbReference>
<dbReference type="CDD" id="cd06612">
    <property type="entry name" value="STKc_MST1_2"/>
    <property type="match status" value="1"/>
</dbReference>
<dbReference type="FunFam" id="1.10.510.10:FF:000075">
    <property type="entry name" value="Serine/threonine-protein kinase 3"/>
    <property type="match status" value="1"/>
</dbReference>
<dbReference type="FunFam" id="3.30.200.20:FF:000410">
    <property type="entry name" value="Serine/threonine-protein kinase 3"/>
    <property type="match status" value="1"/>
</dbReference>
<dbReference type="FunFam" id="4.10.170.10:FF:000002">
    <property type="entry name" value="serine/threonine-protein kinase 3"/>
    <property type="match status" value="1"/>
</dbReference>
<dbReference type="FunFam" id="1.10.287.4270:FF:000004">
    <property type="entry name" value="Serine/threonine-protein kinase 3/4"/>
    <property type="match status" value="1"/>
</dbReference>
<dbReference type="FunFam" id="1.10.287.4270:FF:000002">
    <property type="entry name" value="Serine/threonine-protein kinase 4"/>
    <property type="match status" value="1"/>
</dbReference>
<dbReference type="Gene3D" id="1.10.287.4270">
    <property type="match status" value="1"/>
</dbReference>
<dbReference type="Gene3D" id="4.10.170.10">
    <property type="entry name" value="p53-like tetramerisation domain"/>
    <property type="match status" value="1"/>
</dbReference>
<dbReference type="Gene3D" id="1.10.510.10">
    <property type="entry name" value="Transferase(Phosphotransferase) domain 1"/>
    <property type="match status" value="1"/>
</dbReference>
<dbReference type="InterPro" id="IPR011009">
    <property type="entry name" value="Kinase-like_dom_sf"/>
</dbReference>
<dbReference type="InterPro" id="IPR024205">
    <property type="entry name" value="Mst1_2_SARAH_domain"/>
</dbReference>
<dbReference type="InterPro" id="IPR036674">
    <property type="entry name" value="p53_tetramer_sf"/>
</dbReference>
<dbReference type="InterPro" id="IPR000719">
    <property type="entry name" value="Prot_kinase_dom"/>
</dbReference>
<dbReference type="InterPro" id="IPR017441">
    <property type="entry name" value="Protein_kinase_ATP_BS"/>
</dbReference>
<dbReference type="InterPro" id="IPR011524">
    <property type="entry name" value="SARAH_dom"/>
</dbReference>
<dbReference type="InterPro" id="IPR050629">
    <property type="entry name" value="STE20/SPS1-PAK"/>
</dbReference>
<dbReference type="PANTHER" id="PTHR48012:SF2">
    <property type="entry name" value="STERILE20-LIKE KINASE, ISOFORM B"/>
    <property type="match status" value="1"/>
</dbReference>
<dbReference type="PANTHER" id="PTHR48012">
    <property type="entry name" value="STERILE20-LIKE KINASE, ISOFORM B-RELATED"/>
    <property type="match status" value="1"/>
</dbReference>
<dbReference type="Pfam" id="PF11629">
    <property type="entry name" value="Mst1_SARAH"/>
    <property type="match status" value="1"/>
</dbReference>
<dbReference type="Pfam" id="PF00069">
    <property type="entry name" value="Pkinase"/>
    <property type="match status" value="1"/>
</dbReference>
<dbReference type="SMART" id="SM00220">
    <property type="entry name" value="S_TKc"/>
    <property type="match status" value="1"/>
</dbReference>
<dbReference type="SUPFAM" id="SSF56112">
    <property type="entry name" value="Protein kinase-like (PK-like)"/>
    <property type="match status" value="1"/>
</dbReference>
<dbReference type="PROSITE" id="PS00107">
    <property type="entry name" value="PROTEIN_KINASE_ATP"/>
    <property type="match status" value="1"/>
</dbReference>
<dbReference type="PROSITE" id="PS50011">
    <property type="entry name" value="PROTEIN_KINASE_DOM"/>
    <property type="match status" value="1"/>
</dbReference>
<dbReference type="PROSITE" id="PS50951">
    <property type="entry name" value="SARAH"/>
    <property type="match status" value="1"/>
</dbReference>
<reference key="1">
    <citation type="journal article" date="2007" name="Genome Res.">
        <title>Comparative sequence analyses reveal rapid and divergent evolutionary changes of the WFDC locus in the primate lineage.</title>
        <authorList>
            <consortium name="NISC comparative sequencing program"/>
            <person name="Hurle B."/>
            <person name="Swanson W."/>
            <person name="Green E.D."/>
        </authorList>
    </citation>
    <scope>NUCLEOTIDE SEQUENCE [GENOMIC DNA]</scope>
</reference>
<accession>A4K2M3</accession>
<sequence>METVQLRNPPRRQLKKLDEDSLTKQPEEVFDVLEKLGEGSYGSVYKAIHKETGQIVAIKQVPVESDLQEIIKEISIMQQCDSPHVVKYYGSYFKNTDLWIVMEYCGAGSVSDIIRLRNKTLTEDEIATILQSTLKGLEYLHFMRKIHRDIKAGNILLNTEGQAKLADFGVAGQLTDTMAKRNTVIGTPFWMAPEVIQEIGYNCVADIWSLGITAIEMAEGKPPYADIHPMRAIFMIPTNPPPTFRKPELWSDNFTDFVKQCLVKSPEQRATATQLLQHPFVKSAKGVSILRDLINEAMDVKLKRQESQQREVDQDDEENSEEDEMDSGTMVRAVGDEMGTVRVASTMTDGANTMIEHDDTLPSQLGTMVINTEDEEEEGTMKRRDETMQPAKPSFLEYFEQKEKENQINSFGKSVPGPLKNSSDWKIPQDGDYEFLKSWTVEDLQKRLLALDPMMEQEIEEIRQKYQSKRQPILDAIEAKKRRQQNF</sequence>
<gene>
    <name type="primary">STK4</name>
</gene>
<feature type="chain" id="PRO_0000289630" description="Serine/threonine-protein kinase 4">
    <location>
        <begin position="1"/>
        <end position="487"/>
    </location>
</feature>
<feature type="chain" id="PRO_0000413745" description="Serine/threonine-protein kinase 4 37kDa subunit" evidence="1">
    <location>
        <begin position="1"/>
        <end position="326"/>
    </location>
</feature>
<feature type="chain" id="PRO_0000413746" description="Serine/threonine-protein kinase 4 18kDa subunit" evidence="1">
    <location>
        <begin position="327"/>
        <end position="487"/>
    </location>
</feature>
<feature type="domain" description="Protein kinase" evidence="5">
    <location>
        <begin position="30"/>
        <end position="281"/>
    </location>
</feature>
<feature type="domain" description="SARAH" evidence="6">
    <location>
        <begin position="433"/>
        <end position="480"/>
    </location>
</feature>
<feature type="region of interest" description="Disordered" evidence="7">
    <location>
        <begin position="303"/>
        <end position="332"/>
    </location>
</feature>
<feature type="coiled-coil region" evidence="4">
    <location>
        <begin position="290"/>
        <end position="310"/>
    </location>
</feature>
<feature type="compositionally biased region" description="Basic and acidic residues" evidence="7">
    <location>
        <begin position="303"/>
        <end position="312"/>
    </location>
</feature>
<feature type="compositionally biased region" description="Acidic residues" evidence="7">
    <location>
        <begin position="313"/>
        <end position="326"/>
    </location>
</feature>
<feature type="active site" description="Proton acceptor" evidence="5">
    <location>
        <position position="149"/>
    </location>
</feature>
<feature type="binding site" evidence="5">
    <location>
        <begin position="36"/>
        <end position="44"/>
    </location>
    <ligand>
        <name>ATP</name>
        <dbReference type="ChEBI" id="CHEBI:30616"/>
    </ligand>
</feature>
<feature type="binding site" evidence="5">
    <location>
        <position position="59"/>
    </location>
    <ligand>
        <name>ATP</name>
        <dbReference type="ChEBI" id="CHEBI:30616"/>
    </ligand>
</feature>
<feature type="site" description="Cleavage; by caspase-3" evidence="1">
    <location>
        <begin position="326"/>
        <end position="327"/>
    </location>
</feature>
<feature type="site" description="Cleavage; by caspase-3" evidence="1">
    <location>
        <begin position="349"/>
        <end position="350"/>
    </location>
</feature>
<feature type="modified residue" description="N-acetylmethionine" evidence="2">
    <location>
        <position position="1"/>
    </location>
</feature>
<feature type="modified residue" description="Phosphothreonine" evidence="2">
    <location>
        <position position="3"/>
    </location>
</feature>
<feature type="modified residue" description="Phosphothreonine; by autocatalysis" evidence="2">
    <location>
        <position position="183"/>
    </location>
</feature>
<feature type="modified residue" description="Phosphoserine" evidence="2">
    <location>
        <position position="265"/>
    </location>
</feature>
<feature type="modified residue" description="Phosphoserine" evidence="2">
    <location>
        <position position="320"/>
    </location>
</feature>
<feature type="modified residue" description="Phosphothreonine" evidence="2">
    <location>
        <position position="340"/>
    </location>
</feature>
<feature type="modified residue" description="Phosphothreonine" evidence="2">
    <location>
        <position position="367"/>
    </location>
</feature>
<feature type="modified residue" description="Phosphothreonine; by PKB/AKT1" evidence="2">
    <location>
        <position position="387"/>
    </location>
</feature>
<feature type="modified residue" description="Phosphoserine" evidence="2">
    <location>
        <position position="410"/>
    </location>
</feature>
<feature type="modified residue" description="Phosphoserine" evidence="2">
    <location>
        <position position="414"/>
    </location>
</feature>
<feature type="modified residue" description="Phosphotyrosine" evidence="3">
    <location>
        <position position="433"/>
    </location>
</feature>
<comment type="function">
    <text evidence="2 3">Stress-activated, pro-apoptotic kinase which, following caspase-cleavage, enters the nucleus and induces chromatin condensation followed by internucleosomal DNA fragmentation. Key component of the Hippo signaling pathway which plays a pivotal role in organ size control and tumor suppression by restricting proliferation and promoting apoptosis. The core of this pathway is composed of a kinase cascade wherein STK3/MST2 and STK4/MST1, in complex with its regulatory protein SAV1, phosphorylates and activates LATS1/2 in complex with its regulatory protein MOB1, which in turn phosphorylates and inactivates YAP1 oncoprotein and WWTR1/TAZ. Phosphorylation of YAP1 by LATS2 inhibits its translocation into the nucleus to regulate cellular genes important for cell proliferation, cell death, and cell migration. STK3/MST2 and STK4/MST1 are required to repress proliferation of mature hepatocytes, to prevent activation of facultative adult liver stem cells (oval cells), and to inhibit tumor formation. Phosphorylates 'Ser-14' of histone H2B (H2BS14ph) during apoptosis. Phosphorylates FOXO3 upon oxidative stress, which results in its nuclear translocation and cell death initiation. Phosphorylates MOBKL1A, MOBKL1B and RASSF2. Phosphorylates TNNI3 (cardiac Tn-I) and alters its binding affinity to TNNC1 (cardiac Tn-C) and TNNT2 (cardiac Tn-T). Phosphorylates FOXO1 on 'Ser-212' and regulates its activation and stimulates transcription of PMAIP1 in a FOXO1-dependent manner. Phosphorylates SIRT1 and inhibits SIRT1-mediated p53/TP53 deacetylation, thereby promoting p53/TP53 dependent transcription and apoptosis upon DNA damage. Acts as an inhibitor of PKB/AKT1. Phosphorylates AR on 'Ser-650' and suppresses its activity by intersecting with PKB/AKT1 signaling and antagonizing formation of AR-chromatin complexes.</text>
</comment>
<comment type="catalytic activity">
    <reaction evidence="2">
        <text>L-seryl-[protein] + ATP = O-phospho-L-seryl-[protein] + ADP + H(+)</text>
        <dbReference type="Rhea" id="RHEA:17989"/>
        <dbReference type="Rhea" id="RHEA-COMP:9863"/>
        <dbReference type="Rhea" id="RHEA-COMP:11604"/>
        <dbReference type="ChEBI" id="CHEBI:15378"/>
        <dbReference type="ChEBI" id="CHEBI:29999"/>
        <dbReference type="ChEBI" id="CHEBI:30616"/>
        <dbReference type="ChEBI" id="CHEBI:83421"/>
        <dbReference type="ChEBI" id="CHEBI:456216"/>
        <dbReference type="EC" id="2.7.11.1"/>
    </reaction>
    <physiologicalReaction direction="left-to-right" evidence="2">
        <dbReference type="Rhea" id="RHEA:17990"/>
    </physiologicalReaction>
</comment>
<comment type="catalytic activity">
    <reaction evidence="2">
        <text>L-threonyl-[protein] + ATP = O-phospho-L-threonyl-[protein] + ADP + H(+)</text>
        <dbReference type="Rhea" id="RHEA:46608"/>
        <dbReference type="Rhea" id="RHEA-COMP:11060"/>
        <dbReference type="Rhea" id="RHEA-COMP:11605"/>
        <dbReference type="ChEBI" id="CHEBI:15378"/>
        <dbReference type="ChEBI" id="CHEBI:30013"/>
        <dbReference type="ChEBI" id="CHEBI:30616"/>
        <dbReference type="ChEBI" id="CHEBI:61977"/>
        <dbReference type="ChEBI" id="CHEBI:456216"/>
        <dbReference type="EC" id="2.7.11.1"/>
    </reaction>
    <physiologicalReaction direction="left-to-right" evidence="2">
        <dbReference type="Rhea" id="RHEA:46609"/>
    </physiologicalReaction>
</comment>
<comment type="cofactor">
    <cofactor evidence="1">
        <name>Mg(2+)</name>
        <dbReference type="ChEBI" id="CHEBI:18420"/>
    </cofactor>
</comment>
<comment type="activity regulation">
    <text evidence="1">Inhibited by the C-terminal non-catalytic region. Activated by caspase-cleavage. Full activation also requires homodimerization and autophosphorylation of Thr-183. Activated by RASSF1 which acts by preventing its dephosphorylation (By similarity).</text>
</comment>
<comment type="subunit">
    <text evidence="2">Homodimer; mediated via the coiled-coil region. Interacts with NORE1, which inhibits autoactivation. Interacts with and stabilizes SAV1. Interacts with RASSF1. Interacts with FOXO3. Interacts with RASSF2 (via SARAH domain). Interacts with AR, PKB/AKT1, TNNI3 and SIRT1. Interacts with DLG5 (via PDZ domain 3). Interacts with MARK3 and SCRIB in the presence of DLG5.</text>
</comment>
<comment type="subcellular location">
    <subcellularLocation>
        <location evidence="1">Cytoplasm</location>
    </subcellularLocation>
    <subcellularLocation>
        <location evidence="1">Nucleus</location>
    </subcellularLocation>
    <text evidence="1">The caspase-cleaved form cycles between the nucleus and cytoplasm.</text>
</comment>
<comment type="PTM">
    <text evidence="2">Autophosphorylated on serine and threonine residues. Phosphorylation at Thr-387 by PKB/AKT1, leads to inhibition of its: kinase activity, nuclear translocation and autophosphorylation at Thr-183. It also diminishes its cleavage by caspases and its ability to phosphorylate FOXO3 (By similarity).</text>
</comment>
<comment type="PTM">
    <text evidence="1">Proteolytically cleaved by caspase-3 during apoptosis at Asp-326 and Asp-349 resulting in a 37 kDa or a 39 kDa subunit respectively. The 39 kDa subunit is further cleaved into the 37 kDa form. Proteolytic cleavage results in kinase activation and nuclear translocation of the truncated form (MST1/N). It is less likely that cleavage at Asp-349 is a prerequisite for activation as this site is not conserved in the murine ortholog (By similarity).</text>
</comment>
<comment type="similarity">
    <text evidence="8">Belongs to the protein kinase superfamily. STE Ser/Thr protein kinase family. STE20 subfamily.</text>
</comment>
<proteinExistence type="inferred from homology"/>
<organism>
    <name type="scientific">Papio anubis</name>
    <name type="common">Olive baboon</name>
    <dbReference type="NCBI Taxonomy" id="9555"/>
    <lineage>
        <taxon>Eukaryota</taxon>
        <taxon>Metazoa</taxon>
        <taxon>Chordata</taxon>
        <taxon>Craniata</taxon>
        <taxon>Vertebrata</taxon>
        <taxon>Euteleostomi</taxon>
        <taxon>Mammalia</taxon>
        <taxon>Eutheria</taxon>
        <taxon>Euarchontoglires</taxon>
        <taxon>Primates</taxon>
        <taxon>Haplorrhini</taxon>
        <taxon>Catarrhini</taxon>
        <taxon>Cercopithecidae</taxon>
        <taxon>Cercopithecinae</taxon>
        <taxon>Papio</taxon>
    </lineage>
</organism>